<feature type="chain" id="PRO_0000252828" description="ATP-dependent Clp protease proteolytic subunit 1">
    <location>
        <begin position="1"/>
        <end position="206"/>
    </location>
</feature>
<feature type="active site" description="Nucleophile" evidence="1">
    <location>
        <position position="100"/>
    </location>
</feature>
<feature type="active site" evidence="1">
    <location>
        <position position="125"/>
    </location>
</feature>
<gene>
    <name evidence="1" type="primary">clpP1</name>
    <name type="ordered locus">MXAN_2014</name>
</gene>
<accession>Q1DAT0</accession>
<evidence type="ECO:0000255" key="1">
    <source>
        <dbReference type="HAMAP-Rule" id="MF_00444"/>
    </source>
</evidence>
<organism>
    <name type="scientific">Myxococcus xanthus (strain DK1622)</name>
    <dbReference type="NCBI Taxonomy" id="246197"/>
    <lineage>
        <taxon>Bacteria</taxon>
        <taxon>Pseudomonadati</taxon>
        <taxon>Myxococcota</taxon>
        <taxon>Myxococcia</taxon>
        <taxon>Myxococcales</taxon>
        <taxon>Cystobacterineae</taxon>
        <taxon>Myxococcaceae</taxon>
        <taxon>Myxococcus</taxon>
    </lineage>
</organism>
<comment type="function">
    <text evidence="1">Cleaves peptides in various proteins in a process that requires ATP hydrolysis. Has a chymotrypsin-like activity. Plays a major role in the degradation of misfolded proteins.</text>
</comment>
<comment type="catalytic activity">
    <reaction evidence="1">
        <text>Hydrolysis of proteins to small peptides in the presence of ATP and magnesium. alpha-casein is the usual test substrate. In the absence of ATP, only oligopeptides shorter than five residues are hydrolyzed (such as succinyl-Leu-Tyr-|-NHMec, and Leu-Tyr-Leu-|-Tyr-Trp, in which cleavage of the -Tyr-|-Leu- and -Tyr-|-Trp bonds also occurs).</text>
        <dbReference type="EC" id="3.4.21.92"/>
    </reaction>
</comment>
<comment type="subunit">
    <text evidence="1">Fourteen ClpP subunits assemble into 2 heptameric rings which stack back to back to give a disk-like structure with a central cavity, resembling the structure of eukaryotic proteasomes.</text>
</comment>
<comment type="subcellular location">
    <subcellularLocation>
        <location evidence="1">Cytoplasm</location>
    </subcellularLocation>
</comment>
<comment type="similarity">
    <text evidence="1">Belongs to the peptidase S14 family.</text>
</comment>
<dbReference type="EC" id="3.4.21.92" evidence="1"/>
<dbReference type="EMBL" id="CP000113">
    <property type="protein sequence ID" value="ABF91356.1"/>
    <property type="molecule type" value="Genomic_DNA"/>
</dbReference>
<dbReference type="SMR" id="Q1DAT0"/>
<dbReference type="STRING" id="246197.MXAN_2014"/>
<dbReference type="MEROPS" id="S14.001"/>
<dbReference type="EnsemblBacteria" id="ABF91356">
    <property type="protein sequence ID" value="ABF91356"/>
    <property type="gene ID" value="MXAN_2014"/>
</dbReference>
<dbReference type="GeneID" id="41359424"/>
<dbReference type="KEGG" id="mxa:MXAN_2014"/>
<dbReference type="eggNOG" id="COG0740">
    <property type="taxonomic scope" value="Bacteria"/>
</dbReference>
<dbReference type="HOGENOM" id="CLU_058707_3_2_7"/>
<dbReference type="OrthoDB" id="9802800at2"/>
<dbReference type="Proteomes" id="UP000002402">
    <property type="component" value="Chromosome"/>
</dbReference>
<dbReference type="GO" id="GO:0005737">
    <property type="term" value="C:cytoplasm"/>
    <property type="evidence" value="ECO:0007669"/>
    <property type="project" value="UniProtKB-SubCell"/>
</dbReference>
<dbReference type="GO" id="GO:0009368">
    <property type="term" value="C:endopeptidase Clp complex"/>
    <property type="evidence" value="ECO:0007669"/>
    <property type="project" value="TreeGrafter"/>
</dbReference>
<dbReference type="GO" id="GO:0004176">
    <property type="term" value="F:ATP-dependent peptidase activity"/>
    <property type="evidence" value="ECO:0007669"/>
    <property type="project" value="InterPro"/>
</dbReference>
<dbReference type="GO" id="GO:0051117">
    <property type="term" value="F:ATPase binding"/>
    <property type="evidence" value="ECO:0007669"/>
    <property type="project" value="TreeGrafter"/>
</dbReference>
<dbReference type="GO" id="GO:0004252">
    <property type="term" value="F:serine-type endopeptidase activity"/>
    <property type="evidence" value="ECO:0007669"/>
    <property type="project" value="UniProtKB-UniRule"/>
</dbReference>
<dbReference type="GO" id="GO:0006515">
    <property type="term" value="P:protein quality control for misfolded or incompletely synthesized proteins"/>
    <property type="evidence" value="ECO:0007669"/>
    <property type="project" value="TreeGrafter"/>
</dbReference>
<dbReference type="CDD" id="cd07017">
    <property type="entry name" value="S14_ClpP_2"/>
    <property type="match status" value="1"/>
</dbReference>
<dbReference type="FunFam" id="3.90.226.10:FF:000001">
    <property type="entry name" value="ATP-dependent Clp protease proteolytic subunit"/>
    <property type="match status" value="1"/>
</dbReference>
<dbReference type="Gene3D" id="3.90.226.10">
    <property type="entry name" value="2-enoyl-CoA Hydratase, Chain A, domain 1"/>
    <property type="match status" value="1"/>
</dbReference>
<dbReference type="HAMAP" id="MF_00444">
    <property type="entry name" value="ClpP"/>
    <property type="match status" value="1"/>
</dbReference>
<dbReference type="InterPro" id="IPR001907">
    <property type="entry name" value="ClpP"/>
</dbReference>
<dbReference type="InterPro" id="IPR029045">
    <property type="entry name" value="ClpP/crotonase-like_dom_sf"/>
</dbReference>
<dbReference type="InterPro" id="IPR023562">
    <property type="entry name" value="ClpP/TepA"/>
</dbReference>
<dbReference type="InterPro" id="IPR033135">
    <property type="entry name" value="ClpP_His_AS"/>
</dbReference>
<dbReference type="InterPro" id="IPR018215">
    <property type="entry name" value="ClpP_Ser_AS"/>
</dbReference>
<dbReference type="NCBIfam" id="TIGR00493">
    <property type="entry name" value="clpP"/>
    <property type="match status" value="1"/>
</dbReference>
<dbReference type="NCBIfam" id="NF001368">
    <property type="entry name" value="PRK00277.1"/>
    <property type="match status" value="1"/>
</dbReference>
<dbReference type="NCBIfam" id="NF009205">
    <property type="entry name" value="PRK12553.1"/>
    <property type="match status" value="1"/>
</dbReference>
<dbReference type="PANTHER" id="PTHR10381">
    <property type="entry name" value="ATP-DEPENDENT CLP PROTEASE PROTEOLYTIC SUBUNIT"/>
    <property type="match status" value="1"/>
</dbReference>
<dbReference type="PANTHER" id="PTHR10381:SF70">
    <property type="entry name" value="ATP-DEPENDENT CLP PROTEASE PROTEOLYTIC SUBUNIT"/>
    <property type="match status" value="1"/>
</dbReference>
<dbReference type="Pfam" id="PF00574">
    <property type="entry name" value="CLP_protease"/>
    <property type="match status" value="1"/>
</dbReference>
<dbReference type="PRINTS" id="PR00127">
    <property type="entry name" value="CLPPROTEASEP"/>
</dbReference>
<dbReference type="SUPFAM" id="SSF52096">
    <property type="entry name" value="ClpP/crotonase"/>
    <property type="match status" value="1"/>
</dbReference>
<dbReference type="PROSITE" id="PS00382">
    <property type="entry name" value="CLP_PROTEASE_HIS"/>
    <property type="match status" value="1"/>
</dbReference>
<dbReference type="PROSITE" id="PS00381">
    <property type="entry name" value="CLP_PROTEASE_SER"/>
    <property type="match status" value="1"/>
</dbReference>
<keyword id="KW-0963">Cytoplasm</keyword>
<keyword id="KW-0378">Hydrolase</keyword>
<keyword id="KW-0645">Protease</keyword>
<keyword id="KW-1185">Reference proteome</keyword>
<keyword id="KW-0720">Serine protease</keyword>
<name>CLPP1_MYXXD</name>
<reference key="1">
    <citation type="journal article" date="2006" name="Proc. Natl. Acad. Sci. U.S.A.">
        <title>Evolution of sensory complexity recorded in a myxobacterial genome.</title>
        <authorList>
            <person name="Goldman B.S."/>
            <person name="Nierman W.C."/>
            <person name="Kaiser D."/>
            <person name="Slater S.C."/>
            <person name="Durkin A.S."/>
            <person name="Eisen J.A."/>
            <person name="Ronning C.M."/>
            <person name="Barbazuk W.B."/>
            <person name="Blanchard M."/>
            <person name="Field C."/>
            <person name="Halling C."/>
            <person name="Hinkle G."/>
            <person name="Iartchuk O."/>
            <person name="Kim H.S."/>
            <person name="Mackenzie C."/>
            <person name="Madupu R."/>
            <person name="Miller N."/>
            <person name="Shvartsbeyn A."/>
            <person name="Sullivan S.A."/>
            <person name="Vaudin M."/>
            <person name="Wiegand R."/>
            <person name="Kaplan H.B."/>
        </authorList>
    </citation>
    <scope>NUCLEOTIDE SEQUENCE [LARGE SCALE GENOMIC DNA]</scope>
    <source>
        <strain>DK1622</strain>
    </source>
</reference>
<proteinExistence type="inferred from homology"/>
<sequence length="206" mass="22786">MPFMPVPYVIEQTHRGERSYDIYSRLLKDRIVMLGTEIDDDVANVIVAQLLFLESEDPDKDINLYINSPGGSVTAGLAIYDTMQYVKCPVSTICVGQAASMGAVLLLAGAKGKRYALPSSRIMIHQPLGGVRGQATDIEIQAKEILRMKAKLNELIVKHTGQSIERVEKDTDRDYFMGASEAKAYGIIDEIQNPRKVVGLGKEEKK</sequence>
<protein>
    <recommendedName>
        <fullName evidence="1">ATP-dependent Clp protease proteolytic subunit 1</fullName>
        <ecNumber evidence="1">3.4.21.92</ecNumber>
    </recommendedName>
    <alternativeName>
        <fullName evidence="1">Endopeptidase Clp 1</fullName>
    </alternativeName>
</protein>